<comment type="function">
    <text evidence="5 6 7 11">Reducing polyketide synthase; part of the gene cluster A that mediates the biosynthesis of botcinic acid and its botcinin derivatives, acetate-derived polyketides that contribute to virulence when combined with the sesquiterpene botrydial (PubMed:18208491, PubMed:21722295). Botcinic acid and its derivatives have been shown to induce chlorosis and necrosis during host plant infection, but also have antifungal activities (PubMed:18208491, PubMed:21722295). Two polyketide synthases, BOA6 and BOA9, are involved in the biosynthesis of botcinins. BOA6 mediates the formation of the per-methylated tetraketide core by condensation of four units of malonyl-CoA with one unit of acetyl-CoA, which would be methylated in activated methylene groups to yield a bicyclic acid intermediate that could then either be converted to botrylactone derivatives or lose the starter acetate unit through a retro-Claisen type C-C bond cleavage to yield botcinin derivatives (PubMed:23203902). The second polyketide synthase, BOA9, is probably required for the biosynthesis of the tetraketide side chain of botcinins (Probable). The methyltransferase (MT) domain within BOA6 is probably responsible for the incorporation of four methyl groups (Probable). The trans-enoyl reductase BOA5 might take over the enoyl reductase function of BOA6 that misses an ER domain (Probable). The monooxygenases BOA2, BOA3 and BOA4 might be involved in further hydroxylations at C4, C5 and C8, whereas BOA7, close to BOA9, could potentially be involved in the hydroxylation at C4 in the side chain of botcinins (Probable).</text>
</comment>
<comment type="pathway">
    <text evidence="6 7">Polyketide biosynthesis.</text>
</comment>
<comment type="induction">
    <text evidence="5 6">Expression is up-regulated during tomato leaf infection (PubMed:21722295). Expression of the botcinic acid clusters genes BOA1-13 and BOA17 is coregulated by BCG1 during both in vitro and in planta growth (PubMed:18208491, PubMed:21722295).</text>
</comment>
<comment type="domain">
    <text evidence="10 11">Multidomain protein; including a ketosynthase (KS) that catalyzes repeated decarboxylative condensation to elongate the polyketide backbone; a malonyl-CoA:ACP transacylase (MAT) that selects and transfers the extender unit malonyl-CoA; a dehydratase (DH) domain that reduces hydroxyl groups to enoyl groups; a methyltransferase (MT) domain responsible for the incorporation of methyl groups; a ketoreductase (KR) domain that catalyzes beta-ketoreduction steps; and an acyl-carrier protein (ACP) that serves as the tether of the growing and completed polyketide via its phosphopantetheinyl arm.</text>
</comment>
<comment type="disruption phenotype">
    <text evidence="6">Abolishes botcinic acid and botcinin production. Exhibits markedly reduced virulence when the synthesis of botrydoal is also blocked.</text>
</comment>
<reference key="1">
    <citation type="journal article" date="2008" name="Mol. Microbiol.">
        <title>The Galpha subunit BCG1, the phospholipase C (BcPLC1) and the calcineurin phosphatase co-ordinately regulate gene expression in the grey mould fungus Botrytis cinerea.</title>
        <authorList>
            <person name="Schumacher J."/>
            <person name="Viaud M."/>
            <person name="Simon A."/>
            <person name="Tudzynski B."/>
        </authorList>
    </citation>
    <scope>NUCLEOTIDE SEQUENCE [GENOMIC DNA]</scope>
    <scope>INDUCTION</scope>
    <source>
        <strain>B05.10</strain>
    </source>
</reference>
<reference key="2">
    <citation type="journal article" date="2011" name="Mol. Plant Pathol.">
        <title>The Botrytis cinerea phytotoxin botcinic acid requires two polyketide synthases for production and has a redundant role in virulence with botrydial.</title>
        <authorList>
            <person name="Dalmais B."/>
            <person name="Schumacher J."/>
            <person name="Moraga J."/>
            <person name="Le Pecheur P."/>
            <person name="Tudzynski B."/>
            <person name="Collado I.G."/>
            <person name="Viaud M."/>
        </authorList>
    </citation>
    <scope>FUNCTION</scope>
    <scope>INDUCTION</scope>
    <scope>DISRUPTION PHENOTYPE</scope>
    <scope>DOMAIN</scope>
    <scope>PATHWAY</scope>
</reference>
<reference key="3">
    <citation type="journal article" date="2013" name="ChemBioChem">
        <title>A shared biosynthetic pathway for botcinins and botrylactones revealed through gene deletions.</title>
        <authorList>
            <person name="Massaroli M."/>
            <person name="Moraga J."/>
            <person name="Bastos Borges K."/>
            <person name="Ramirez-Fernandez J."/>
            <person name="Viaud M."/>
            <person name="Gonzalez Collado I."/>
            <person name="Duran-Patron R."/>
            <person name="Hernandez-Galan R."/>
        </authorList>
    </citation>
    <scope>FUNCTION</scope>
    <scope>DOMAIN</scope>
    <scope>PATHWAY</scope>
</reference>
<proteinExistence type="evidence at transcript level"/>
<evidence type="ECO:0000255" key="1"/>
<evidence type="ECO:0000255" key="2">
    <source>
        <dbReference type="PROSITE-ProRule" id="PRU00258"/>
    </source>
</evidence>
<evidence type="ECO:0000255" key="3">
    <source>
        <dbReference type="PROSITE-ProRule" id="PRU01348"/>
    </source>
</evidence>
<evidence type="ECO:0000255" key="4">
    <source>
        <dbReference type="PROSITE-ProRule" id="PRU01363"/>
    </source>
</evidence>
<evidence type="ECO:0000269" key="5">
    <source>
    </source>
</evidence>
<evidence type="ECO:0000269" key="6">
    <source>
    </source>
</evidence>
<evidence type="ECO:0000269" key="7">
    <source>
    </source>
</evidence>
<evidence type="ECO:0000303" key="8">
    <source>
    </source>
</evidence>
<evidence type="ECO:0000303" key="9">
    <source>
    </source>
</evidence>
<evidence type="ECO:0000305" key="10">
    <source>
    </source>
</evidence>
<evidence type="ECO:0000305" key="11">
    <source>
    </source>
</evidence>
<sequence length="2460" mass="268877">MVVPNEPIAVIGTGCRFPGGASSPSKLWNLLHHPYDLTQKVPSSRFNIKAFYHPNGEHHGTTNATKSYFLNEDPTTFDAPFFNINPREAEALDPQQRLLLETVYEALEAAGLSIEEMQGTSTAVYVGLMCADYFDVLMRDIEDIPQYLATGTARSIMSNRISYFFDWKGPSMTIDTACSSSLVAVHNAISTLRSGQSRTAIAAGANLIFGPEMYIGESNLHMLSPTGRSQMWDSRADGYARGEGTAAIVLKTLKNALEDGDDIEYIIRETGVNSDGKSKGITMPLAASQADLIRQTYARAGLDCTKPSERCQYFEAHGTGTPAGDPVEAEAISSAFFPQRSDILNSEPLHVGSIKTVIGHLEGAAGLAGIIKAGLALKEKTIPPNLHFQSLNSAIEPFYGNLNVPTAPLPWPAVEGPLRASVNSFGFGGTNAHAILESYEVCTPTPSLESTALIPFTISAISEDCLIQNITNFSDYIEEHEGVNLIDLGYSLLGRSNFPTKATFVASNTEDLLDQLEKVIIAKEENPNLAIGIRSTNVNDKSSRKILGVFTGQGAQWPAMGKMLIANIPSFSQTIDSLEKSLRELPDAPKWSLKDEIVASVGKSSIEKAEFSQPLCTALQIALVDLLKLIGVTFSAVVGHSSGEIGAAYAAGRLTAGDAIRIAYYRGLHAHLAKGKGGEEGSMMAAGLSFDEALEFCAGEEYQGKISIAASNAPKTVTLSGNKDAIEKAKSTLDDRGVFARVLKVDTAYHSDHMLPCSEPYTRSLAACKISPKPSLLDCTWISSVHLKNMSSESSELETKYWVDNLVSPVRFFEAVSIAAKEFGSFDAAVEVGPHPALKGPVAQTFKHAVNAVVPYTGVLSRGDNDSIAFANALGFLLNYINGKRISFKKYLDAISGGVVTTPKLLKGLPTYSWDHSRTFWFESRISRNYRNRVDPPHELLGVRCADDTDMEYRWRNIFKLDELPWVSGHKFQRQTLVPAAFYCSMALESSKVLANGKPIRLVELHQVDIERAINLEENNAAVEVMFALKPRSSSASGSDEIVCADFWCTAAPSGKPMSMIFSGRIKMTLGTPSPDAMSIRSPVRPVLGPLNVDRFYDSLANVGLEFTGIFRGIEKGQRRMHISSLEGRRCLSDTGLLVHPAFLDMTLHATLAAFASPGDERFWTPYLPRRIAKMSFNIALCEAAFEKETALAGMDGYITEVTPTTANDAATYVGDVDVFDPLTNEIEIQIEGLQMQSFTAARPSQDRQLYLETLWAADISGGIISEVDIEDDDPKALHLIDLGERLSYAYMRHLMSEIKPENIPDHHRPLFNWINHVTDLVSKGTHPSIKPEWNNDDLQELITMASIYPECVDLELMQAVGNNLPDVVRGTTTMLEHMLPNGLLDRLYTEGIGMATSNKFVTAAMKKIGHRYPKMRVLEIGAGTGGATKGIFTGIGDAFAHYTFTDISTGFFMKAREVFSDYANRMTFSLLNCEKDPLEQGYEAHSFDVIVASNVLHATEFLEKTMRNVRTLLKPGGYLCLLECTGHLERTGFLMAGLPGWWLGGADGRPYRPTISPPEWDSVLKKTGFSGVDAIVNDFKDKSRYTVSVILSQALDDDVQKLREPLQYHPESTGKDLIVIGGSSIATQLLVETIKQDIPSWETRKTIVLATWEEASKLTIPFGTTILSVADLDEPIFKSMNAERLKGIQTVINSAESVLWVTTGCKADEPYANMAIGLGRSIISEMPHLNLQFLDVDLKGNAAKVIGETLVRLEVATGLLDSRKENLLWSIEPEMIYENGQLYLPRVKPIKKLNDVLNSTRRVITEEVLLASKKVTITPPTVGNRFNLEVQEVVMDHLDSENELEISVSFSSLYTVNIDGNFLYIILGKTKSGSSILALSASNQSLITVPKDWAIPASQATPEYLECAMAYLLAKQILNKGSSSVLLHEPSFALSQAVESIAKADGKSISNIASTKSTTSIQNCIKVHPTLSKRAIRDLLPASIQSFVDISGTGKHVKDALTKLTSIIEIDGFLGVTPAKSSSSVDPSTVLADVVAYADSTKTKDIEGRFLLNAGSLKHGHVSSFSPLSVVDWTSNTTLTVDVKPFSQNQIFDKNKSYLLAGLTGDLGQSICRWMVEAGARYIIIGSRSVKSGTPWQQELQRMGATVLVYTIDFTDKEAVTRLREEAIKTMPPIAGVMNGCMVLDDKPFSDMPFETLERVIRPKVLSTINIDAVFGLELDFFVLFSSLAAVNGIPGQSNYAAANMYMASLAEQRRKRGGVASVIHIGMILGVGYVERSGRFTESALRSYNYLTIPEHEFLQVLSEAVQSGHPASNRCPEIIIGMVAPLTGEERDKPRWHANPRFAFVMNDFTNEESDSQGEVEVPTKEQLAKAQTKDEVLGVMQKCFAKQLELILQADSGSIDESAPLTQLGIDSLIAVEIRSWFLKEAGVSLPVLKILGGAAAKDLCELACEEYKVTE</sequence>
<keyword id="KW-0489">Methyltransferase</keyword>
<keyword id="KW-0511">Multifunctional enzyme</keyword>
<keyword id="KW-0560">Oxidoreductase</keyword>
<keyword id="KW-0596">Phosphopantetheine</keyword>
<keyword id="KW-0597">Phosphoprotein</keyword>
<keyword id="KW-0808">Transferase</keyword>
<keyword id="KW-0843">Virulence</keyword>
<gene>
    <name evidence="9" type="primary">BOA6</name>
    <name evidence="8" type="synonym">PKS6</name>
</gene>
<protein>
    <recommendedName>
        <fullName evidence="9">Reducing polyketide synthase BOA6</fullName>
        <ecNumber evidence="10">2.3.1.-</ecNumber>
    </recommendedName>
    <alternativeName>
        <fullName evidence="9">Botcinic acid biosynthesis cluster A protein 6</fullName>
    </alternativeName>
    <alternativeName>
        <fullName evidence="8">Polyketide synthase 6</fullName>
        <shortName evidence="8">PKS6</shortName>
    </alternativeName>
</protein>
<organism>
    <name type="scientific">Botryotinia fuckeliana (strain B05.10)</name>
    <name type="common">Noble rot fungus</name>
    <name type="synonym">Botrytis cinerea</name>
    <dbReference type="NCBI Taxonomy" id="332648"/>
    <lineage>
        <taxon>Eukaryota</taxon>
        <taxon>Fungi</taxon>
        <taxon>Dikarya</taxon>
        <taxon>Ascomycota</taxon>
        <taxon>Pezizomycotina</taxon>
        <taxon>Leotiomycetes</taxon>
        <taxon>Helotiales</taxon>
        <taxon>Sclerotiniaceae</taxon>
        <taxon>Botrytis</taxon>
    </lineage>
</organism>
<dbReference type="EC" id="2.3.1.-" evidence="10"/>
<dbReference type="EMBL" id="AM930232">
    <property type="protein sequence ID" value="CAP58786.1"/>
    <property type="molecule type" value="Genomic_DNA"/>
</dbReference>
<dbReference type="SMR" id="B1GVX7"/>
<dbReference type="PHI-base" id="PHI:2290"/>
<dbReference type="GO" id="GO:0004315">
    <property type="term" value="F:3-oxoacyl-[acyl-carrier-protein] synthase activity"/>
    <property type="evidence" value="ECO:0007669"/>
    <property type="project" value="InterPro"/>
</dbReference>
<dbReference type="GO" id="GO:0004312">
    <property type="term" value="F:fatty acid synthase activity"/>
    <property type="evidence" value="ECO:0007669"/>
    <property type="project" value="TreeGrafter"/>
</dbReference>
<dbReference type="GO" id="GO:0008168">
    <property type="term" value="F:methyltransferase activity"/>
    <property type="evidence" value="ECO:0007669"/>
    <property type="project" value="UniProtKB-KW"/>
</dbReference>
<dbReference type="GO" id="GO:0016491">
    <property type="term" value="F:oxidoreductase activity"/>
    <property type="evidence" value="ECO:0007669"/>
    <property type="project" value="UniProtKB-KW"/>
</dbReference>
<dbReference type="GO" id="GO:0031177">
    <property type="term" value="F:phosphopantetheine binding"/>
    <property type="evidence" value="ECO:0007669"/>
    <property type="project" value="InterPro"/>
</dbReference>
<dbReference type="GO" id="GO:0006633">
    <property type="term" value="P:fatty acid biosynthetic process"/>
    <property type="evidence" value="ECO:0007669"/>
    <property type="project" value="InterPro"/>
</dbReference>
<dbReference type="GO" id="GO:0032259">
    <property type="term" value="P:methylation"/>
    <property type="evidence" value="ECO:0007669"/>
    <property type="project" value="UniProtKB-KW"/>
</dbReference>
<dbReference type="GO" id="GO:0044550">
    <property type="term" value="P:secondary metabolite biosynthetic process"/>
    <property type="evidence" value="ECO:0007669"/>
    <property type="project" value="TreeGrafter"/>
</dbReference>
<dbReference type="CDD" id="cd00833">
    <property type="entry name" value="PKS"/>
    <property type="match status" value="1"/>
</dbReference>
<dbReference type="FunFam" id="3.40.47.10:FF:000019">
    <property type="entry name" value="Polyketide synthase type I"/>
    <property type="match status" value="1"/>
</dbReference>
<dbReference type="Gene3D" id="3.40.47.10">
    <property type="match status" value="1"/>
</dbReference>
<dbReference type="Gene3D" id="1.10.1200.10">
    <property type="entry name" value="ACP-like"/>
    <property type="match status" value="1"/>
</dbReference>
<dbReference type="Gene3D" id="3.40.366.10">
    <property type="entry name" value="Malonyl-Coenzyme A Acyl Carrier Protein, domain 2"/>
    <property type="match status" value="1"/>
</dbReference>
<dbReference type="Gene3D" id="3.40.50.720">
    <property type="entry name" value="NAD(P)-binding Rossmann-like Domain"/>
    <property type="match status" value="2"/>
</dbReference>
<dbReference type="Gene3D" id="3.10.129.110">
    <property type="entry name" value="Polyketide synthase dehydratase"/>
    <property type="match status" value="1"/>
</dbReference>
<dbReference type="Gene3D" id="3.40.50.150">
    <property type="entry name" value="Vaccinia Virus protein VP39"/>
    <property type="match status" value="1"/>
</dbReference>
<dbReference type="InterPro" id="IPR001227">
    <property type="entry name" value="Ac_transferase_dom_sf"/>
</dbReference>
<dbReference type="InterPro" id="IPR036736">
    <property type="entry name" value="ACP-like_sf"/>
</dbReference>
<dbReference type="InterPro" id="IPR014043">
    <property type="entry name" value="Acyl_transferase_dom"/>
</dbReference>
<dbReference type="InterPro" id="IPR016035">
    <property type="entry name" value="Acyl_Trfase/lysoPLipase"/>
</dbReference>
<dbReference type="InterPro" id="IPR018201">
    <property type="entry name" value="Ketoacyl_synth_AS"/>
</dbReference>
<dbReference type="InterPro" id="IPR014031">
    <property type="entry name" value="Ketoacyl_synth_C"/>
</dbReference>
<dbReference type="InterPro" id="IPR014030">
    <property type="entry name" value="Ketoacyl_synth_N"/>
</dbReference>
<dbReference type="InterPro" id="IPR016036">
    <property type="entry name" value="Malonyl_transacylase_ACP-bd"/>
</dbReference>
<dbReference type="InterPro" id="IPR013217">
    <property type="entry name" value="Methyltransf_12"/>
</dbReference>
<dbReference type="InterPro" id="IPR036291">
    <property type="entry name" value="NAD(P)-bd_dom_sf"/>
</dbReference>
<dbReference type="InterPro" id="IPR032821">
    <property type="entry name" value="PKS_assoc"/>
</dbReference>
<dbReference type="InterPro" id="IPR020841">
    <property type="entry name" value="PKS_Beta-ketoAc_synthase_dom"/>
</dbReference>
<dbReference type="InterPro" id="IPR042104">
    <property type="entry name" value="PKS_dehydratase_sf"/>
</dbReference>
<dbReference type="InterPro" id="IPR020807">
    <property type="entry name" value="PKS_DH"/>
</dbReference>
<dbReference type="InterPro" id="IPR049551">
    <property type="entry name" value="PKS_DH_C"/>
</dbReference>
<dbReference type="InterPro" id="IPR049552">
    <property type="entry name" value="PKS_DH_N"/>
</dbReference>
<dbReference type="InterPro" id="IPR013968">
    <property type="entry name" value="PKS_KR"/>
</dbReference>
<dbReference type="InterPro" id="IPR049900">
    <property type="entry name" value="PKS_mFAS_DH"/>
</dbReference>
<dbReference type="InterPro" id="IPR050091">
    <property type="entry name" value="PKS_NRPS_Biosynth_Enz"/>
</dbReference>
<dbReference type="InterPro" id="IPR020806">
    <property type="entry name" value="PKS_PP-bd"/>
</dbReference>
<dbReference type="InterPro" id="IPR009081">
    <property type="entry name" value="PP-bd_ACP"/>
</dbReference>
<dbReference type="InterPro" id="IPR006162">
    <property type="entry name" value="Ppantetheine_attach_site"/>
</dbReference>
<dbReference type="InterPro" id="IPR029063">
    <property type="entry name" value="SAM-dependent_MTases_sf"/>
</dbReference>
<dbReference type="InterPro" id="IPR016039">
    <property type="entry name" value="Thiolase-like"/>
</dbReference>
<dbReference type="PANTHER" id="PTHR43775">
    <property type="entry name" value="FATTY ACID SYNTHASE"/>
    <property type="match status" value="1"/>
</dbReference>
<dbReference type="PANTHER" id="PTHR43775:SF20">
    <property type="entry name" value="HYBRID PKS-NRPS SYNTHETASE APDA"/>
    <property type="match status" value="1"/>
</dbReference>
<dbReference type="Pfam" id="PF00698">
    <property type="entry name" value="Acyl_transf_1"/>
    <property type="match status" value="1"/>
</dbReference>
<dbReference type="Pfam" id="PF16197">
    <property type="entry name" value="KAsynt_C_assoc"/>
    <property type="match status" value="1"/>
</dbReference>
<dbReference type="Pfam" id="PF00109">
    <property type="entry name" value="ketoacyl-synt"/>
    <property type="match status" value="1"/>
</dbReference>
<dbReference type="Pfam" id="PF02801">
    <property type="entry name" value="Ketoacyl-synt_C"/>
    <property type="match status" value="1"/>
</dbReference>
<dbReference type="Pfam" id="PF08659">
    <property type="entry name" value="KR"/>
    <property type="match status" value="1"/>
</dbReference>
<dbReference type="Pfam" id="PF08242">
    <property type="entry name" value="Methyltransf_12"/>
    <property type="match status" value="1"/>
</dbReference>
<dbReference type="Pfam" id="PF21089">
    <property type="entry name" value="PKS_DH_N"/>
    <property type="match status" value="1"/>
</dbReference>
<dbReference type="Pfam" id="PF00550">
    <property type="entry name" value="PP-binding"/>
    <property type="match status" value="1"/>
</dbReference>
<dbReference type="Pfam" id="PF14765">
    <property type="entry name" value="PS-DH"/>
    <property type="match status" value="1"/>
</dbReference>
<dbReference type="SMART" id="SM00827">
    <property type="entry name" value="PKS_AT"/>
    <property type="match status" value="1"/>
</dbReference>
<dbReference type="SMART" id="SM00826">
    <property type="entry name" value="PKS_DH"/>
    <property type="match status" value="1"/>
</dbReference>
<dbReference type="SMART" id="SM00822">
    <property type="entry name" value="PKS_KR"/>
    <property type="match status" value="1"/>
</dbReference>
<dbReference type="SMART" id="SM00825">
    <property type="entry name" value="PKS_KS"/>
    <property type="match status" value="1"/>
</dbReference>
<dbReference type="SMART" id="SM00823">
    <property type="entry name" value="PKS_PP"/>
    <property type="match status" value="1"/>
</dbReference>
<dbReference type="SUPFAM" id="SSF47336">
    <property type="entry name" value="ACP-like"/>
    <property type="match status" value="1"/>
</dbReference>
<dbReference type="SUPFAM" id="SSF52151">
    <property type="entry name" value="FabD/lysophospholipase-like"/>
    <property type="match status" value="1"/>
</dbReference>
<dbReference type="SUPFAM" id="SSF51735">
    <property type="entry name" value="NAD(P)-binding Rossmann-fold domains"/>
    <property type="match status" value="1"/>
</dbReference>
<dbReference type="SUPFAM" id="SSF55048">
    <property type="entry name" value="Probable ACP-binding domain of malonyl-CoA ACP transacylase"/>
    <property type="match status" value="1"/>
</dbReference>
<dbReference type="SUPFAM" id="SSF53335">
    <property type="entry name" value="S-adenosyl-L-methionine-dependent methyltransferases"/>
    <property type="match status" value="1"/>
</dbReference>
<dbReference type="SUPFAM" id="SSF53901">
    <property type="entry name" value="Thiolase-like"/>
    <property type="match status" value="1"/>
</dbReference>
<dbReference type="PROSITE" id="PS50075">
    <property type="entry name" value="CARRIER"/>
    <property type="match status" value="1"/>
</dbReference>
<dbReference type="PROSITE" id="PS00606">
    <property type="entry name" value="KS3_1"/>
    <property type="match status" value="1"/>
</dbReference>
<dbReference type="PROSITE" id="PS52004">
    <property type="entry name" value="KS3_2"/>
    <property type="match status" value="1"/>
</dbReference>
<dbReference type="PROSITE" id="PS00012">
    <property type="entry name" value="PHOSPHOPANTETHEINE"/>
    <property type="match status" value="1"/>
</dbReference>
<dbReference type="PROSITE" id="PS52019">
    <property type="entry name" value="PKS_MFAS_DH"/>
    <property type="match status" value="1"/>
</dbReference>
<accession>B1GVX7</accession>
<name>BOA6_BOTFB</name>
<feature type="chain" id="PRO_0000444645" description="Reducing polyketide synthase BOA6">
    <location>
        <begin position="1"/>
        <end position="2460"/>
    </location>
</feature>
<feature type="domain" description="Ketosynthase family 3 (KS3)" evidence="3 10 11">
    <location>
        <begin position="5"/>
        <end position="438"/>
    </location>
</feature>
<feature type="domain" description="PKS/mFAS DH" evidence="4">
    <location>
        <begin position="938"/>
        <end position="1245"/>
    </location>
</feature>
<feature type="domain" description="Carrier" evidence="2 10">
    <location>
        <begin position="2378"/>
        <end position="2456"/>
    </location>
</feature>
<feature type="region of interest" description="Malonyl-CoA:ACP transacylase (MAT) domain" evidence="1 10 11">
    <location>
        <begin position="549"/>
        <end position="864"/>
    </location>
</feature>
<feature type="region of interest" description="Dehydratase (DH) domain" evidence="1 10 11">
    <location>
        <begin position="938"/>
        <end position="1244"/>
    </location>
</feature>
<feature type="region of interest" description="N-terminal hotdog fold" evidence="4">
    <location>
        <begin position="938"/>
        <end position="1073"/>
    </location>
</feature>
<feature type="region of interest" description="C-terminal hotdog fold" evidence="4">
    <location>
        <begin position="1088"/>
        <end position="1245"/>
    </location>
</feature>
<feature type="region of interest" description="Methyltransferase (MT) domain" evidence="1 10 11">
    <location>
        <begin position="1399"/>
        <end position="1586"/>
    </location>
</feature>
<feature type="region of interest" description="Ketoreductase (KR) domain" evidence="1 10 11">
    <location>
        <begin position="2098"/>
        <end position="2266"/>
    </location>
</feature>
<feature type="active site" description="For beta-ketoacyl synthase activity" evidence="3">
    <location>
        <position position="178"/>
    </location>
</feature>
<feature type="active site" description="For beta-ketoacyl synthase activity" evidence="3">
    <location>
        <position position="317"/>
    </location>
</feature>
<feature type="active site" description="For beta-ketoacyl synthase activity" evidence="3">
    <location>
        <position position="360"/>
    </location>
</feature>
<feature type="active site" description="Proton acceptor; for dehydratase activity" evidence="4">
    <location>
        <position position="970"/>
    </location>
</feature>
<feature type="active site" description="Proton donor; for dehydratase activity" evidence="4">
    <location>
        <position position="1145"/>
    </location>
</feature>
<feature type="modified residue" description="O-(pantetheine 4'-phosphoryl)serine" evidence="2">
    <location>
        <position position="2416"/>
    </location>
</feature>